<keyword id="KW-1003">Cell membrane</keyword>
<keyword id="KW-0169">Cobalamin biosynthesis</keyword>
<keyword id="KW-0170">Cobalt</keyword>
<keyword id="KW-0171">Cobalt transport</keyword>
<keyword id="KW-0406">Ion transport</keyword>
<keyword id="KW-0472">Membrane</keyword>
<keyword id="KW-1185">Reference proteome</keyword>
<keyword id="KW-0732">Signal</keyword>
<keyword id="KW-0812">Transmembrane</keyword>
<keyword id="KW-1133">Transmembrane helix</keyword>
<keyword id="KW-0813">Transport</keyword>
<dbReference type="EMBL" id="CP001348">
    <property type="protein sequence ID" value="ACL75622.1"/>
    <property type="molecule type" value="Genomic_DNA"/>
</dbReference>
<dbReference type="RefSeq" id="WP_015924771.1">
    <property type="nucleotide sequence ID" value="NC_011898.1"/>
</dbReference>
<dbReference type="SMR" id="B8I0P7"/>
<dbReference type="STRING" id="394503.Ccel_1266"/>
<dbReference type="KEGG" id="cce:Ccel_1266"/>
<dbReference type="eggNOG" id="COG0310">
    <property type="taxonomic scope" value="Bacteria"/>
</dbReference>
<dbReference type="HOGENOM" id="CLU_052508_3_0_9"/>
<dbReference type="OrthoDB" id="9809846at2"/>
<dbReference type="UniPathway" id="UPA00148"/>
<dbReference type="Proteomes" id="UP000001349">
    <property type="component" value="Chromosome"/>
</dbReference>
<dbReference type="GO" id="GO:0043190">
    <property type="term" value="C:ATP-binding cassette (ABC) transporter complex"/>
    <property type="evidence" value="ECO:0007669"/>
    <property type="project" value="InterPro"/>
</dbReference>
<dbReference type="GO" id="GO:0015087">
    <property type="term" value="F:cobalt ion transmembrane transporter activity"/>
    <property type="evidence" value="ECO:0007669"/>
    <property type="project" value="UniProtKB-UniRule"/>
</dbReference>
<dbReference type="GO" id="GO:0009236">
    <property type="term" value="P:cobalamin biosynthetic process"/>
    <property type="evidence" value="ECO:0007669"/>
    <property type="project" value="UniProtKB-UniRule"/>
</dbReference>
<dbReference type="FunFam" id="1.10.1760.20:FF:000001">
    <property type="entry name" value="Cobalt transport protein CbiM"/>
    <property type="match status" value="1"/>
</dbReference>
<dbReference type="Gene3D" id="1.10.1760.20">
    <property type="match status" value="1"/>
</dbReference>
<dbReference type="HAMAP" id="MF_01462">
    <property type="entry name" value="CbiM"/>
    <property type="match status" value="1"/>
</dbReference>
<dbReference type="InterPro" id="IPR018024">
    <property type="entry name" value="CbiM"/>
</dbReference>
<dbReference type="InterPro" id="IPR002751">
    <property type="entry name" value="CbiM/NikMN"/>
</dbReference>
<dbReference type="NCBIfam" id="TIGR00123">
    <property type="entry name" value="cbiM"/>
    <property type="match status" value="1"/>
</dbReference>
<dbReference type="NCBIfam" id="NF006184">
    <property type="entry name" value="PRK08319.1"/>
    <property type="match status" value="1"/>
</dbReference>
<dbReference type="PANTHER" id="PTHR43627">
    <property type="match status" value="1"/>
</dbReference>
<dbReference type="PANTHER" id="PTHR43627:SF1">
    <property type="entry name" value="COBALT TRANSPORT PROTEIN CBIM"/>
    <property type="match status" value="1"/>
</dbReference>
<dbReference type="Pfam" id="PF01891">
    <property type="entry name" value="CbiM"/>
    <property type="match status" value="1"/>
</dbReference>
<protein>
    <recommendedName>
        <fullName evidence="1">Cobalt transport protein CbiM</fullName>
    </recommendedName>
    <alternativeName>
        <fullName evidence="1">Energy-coupling factor transporter probable substrate-capture protein CbiM</fullName>
        <shortName evidence="1">ECF transporter S component CbiM</shortName>
    </alternativeName>
</protein>
<proteinExistence type="inferred from homology"/>
<reference key="1">
    <citation type="submission" date="2009-01" db="EMBL/GenBank/DDBJ databases">
        <title>Complete sequence of Clostridium cellulolyticum H10.</title>
        <authorList>
            <consortium name="US DOE Joint Genome Institute"/>
            <person name="Lucas S."/>
            <person name="Copeland A."/>
            <person name="Lapidus A."/>
            <person name="Glavina del Rio T."/>
            <person name="Dalin E."/>
            <person name="Tice H."/>
            <person name="Bruce D."/>
            <person name="Goodwin L."/>
            <person name="Pitluck S."/>
            <person name="Chertkov O."/>
            <person name="Saunders E."/>
            <person name="Brettin T."/>
            <person name="Detter J.C."/>
            <person name="Han C."/>
            <person name="Larimer F."/>
            <person name="Land M."/>
            <person name="Hauser L."/>
            <person name="Kyrpides N."/>
            <person name="Ivanova N."/>
            <person name="Zhou J."/>
            <person name="Richardson P."/>
        </authorList>
    </citation>
    <scope>NUCLEOTIDE SEQUENCE [LARGE SCALE GENOMIC DNA]</scope>
    <source>
        <strain>ATCC 35319 / DSM 5812 / JCM 6584 / H10</strain>
    </source>
</reference>
<gene>
    <name evidence="1" type="primary">cbiM</name>
    <name type="ordered locus">Ccel_1266</name>
</gene>
<organism>
    <name type="scientific">Ruminiclostridium cellulolyticum (strain ATCC 35319 / DSM 5812 / JCM 6584 / H10)</name>
    <name type="common">Clostridium cellulolyticum</name>
    <dbReference type="NCBI Taxonomy" id="394503"/>
    <lineage>
        <taxon>Bacteria</taxon>
        <taxon>Bacillati</taxon>
        <taxon>Bacillota</taxon>
        <taxon>Clostridia</taxon>
        <taxon>Eubacteriales</taxon>
        <taxon>Oscillospiraceae</taxon>
        <taxon>Ruminiclostridium</taxon>
    </lineage>
</organism>
<evidence type="ECO:0000255" key="1">
    <source>
        <dbReference type="HAMAP-Rule" id="MF_01462"/>
    </source>
</evidence>
<feature type="signal peptide" evidence="1">
    <location>
        <begin position="1"/>
        <end position="29"/>
    </location>
</feature>
<feature type="chain" id="PRO_5000429993" description="Cobalt transport protein CbiM">
    <location>
        <begin position="30"/>
        <end position="248"/>
    </location>
</feature>
<feature type="transmembrane region" description="Helical" evidence="1">
    <location>
        <begin position="40"/>
        <end position="60"/>
    </location>
</feature>
<feature type="transmembrane region" description="Helical" evidence="1">
    <location>
        <begin position="72"/>
        <end position="92"/>
    </location>
</feature>
<feature type="transmembrane region" description="Helical" evidence="1">
    <location>
        <begin position="104"/>
        <end position="124"/>
    </location>
</feature>
<feature type="transmembrane region" description="Helical" evidence="1">
    <location>
        <begin position="136"/>
        <end position="156"/>
    </location>
</feature>
<feature type="transmembrane region" description="Helical" evidence="1">
    <location>
        <begin position="167"/>
        <end position="187"/>
    </location>
</feature>
<feature type="transmembrane region" description="Helical" evidence="1">
    <location>
        <begin position="210"/>
        <end position="230"/>
    </location>
</feature>
<sequence>MKRVSVKNYLVCLLIAVCAIFVFPANASAMHIMEGYLAPGWCISWGVMCMPFLVIGFFSIKKKIEVSSKNLTLLAMCGAFAFVLSALKMPSVTGSCSHPTGVGLGAVLFGPTAMSVIGAIILLFQAILLAHGGITTLGANVFSMAIVGPLVSFGVFKLSKRWGAKAGLAVFLAVFFGDLMTYVITSVELAMAYPDATGSFMVSLGKFISIFGFTQVPLAVCEGLLTVVIYNVLAKYSAKELKALSAIY</sequence>
<name>CBIM_RUMCH</name>
<accession>B8I0P7</accession>
<comment type="function">
    <text evidence="1">Part of the energy-coupling factor (ECF) transporter complex CbiMNOQ involved in cobalt import.</text>
</comment>
<comment type="pathway">
    <text evidence="1">Cofactor biosynthesis; adenosylcobalamin biosynthesis.</text>
</comment>
<comment type="subunit">
    <text evidence="1">Forms an energy-coupling factor (ECF) transporter complex composed of an ATP-binding protein (A component, CbiO), a transmembrane protein (T component, CbiQ) and 2 possible substrate-capture proteins (S components, CbiM and CbiN) of unknown stoichimetry.</text>
</comment>
<comment type="subcellular location">
    <subcellularLocation>
        <location evidence="1">Cell membrane</location>
        <topology evidence="1">Multi-pass membrane protein</topology>
    </subcellularLocation>
</comment>
<comment type="similarity">
    <text evidence="1">Belongs to the CbiM family.</text>
</comment>